<protein>
    <recommendedName>
        <fullName evidence="1">Valine--tRNA ligase</fullName>
        <ecNumber evidence="1">6.1.1.9</ecNumber>
    </recommendedName>
    <alternativeName>
        <fullName evidence="1">Valyl-tRNA synthetase</fullName>
        <shortName evidence="1">ValRS</shortName>
    </alternativeName>
</protein>
<sequence length="879" mass="99939">MELASKYNPADVEGKWYQYWLEHRLFSSKPDGREPYTIVIPPPNVTGVLHMGHMLNNTIQDILVRRARMEGKNACWVPGTDHASIATEAKVVNKLAAQGIKKTDLTRDEFLKHAWDWTEEHGGIILKQLRKLGASCDWDRTAFTMDEERSKSVLKVFVDLYNKGLIYRGVRMVNWDPKALTALSDEEVIYKEEHGKLFYLRYKVEGDPEGRYAVVATTRPETIMGDTAMCINPNDPKNAWLKGKKVIVPLVNRVIPVIEDDYVDIEFGTGCLKVTPAHDVNDYMLGEKYNLPSIDIFNDNGTLSEAAGLYIGMDRFDVRKQIEKDLDAAGLLEKTEAYTNKVGYSERTNVVIEPKLSMQWFLKMQHFADMALPPVMNDELKFYPAKYKNTYRHWMENIKDWCISRQLWWGHRIPAYFLPEGGYVVAATPEEALAKAKEKTGNAALTMDDLRQDEDCLDTWFSSWLWPISLFDGINHPGNEEISYYYPTSDLVTGPDIIFFWVARMIMVGYEYEGKMPFKNVYFTGIVRDKLGRKMSKSLGNSPDPLELIDKYGADGVRMGMMLAAPAGNDILFDDALCEQGRNFCSKIWNAFRLIKGWTVDDNIQASDAAKLAVHWFESKQNEVAAEVADLFSKYRLSEALMAVYKLFWDEFSSWYLEMIKPAYGQGIDRTTYSATLCFLDNLLHLLHPFMPFITEELWQQMYERNAEEGESLMVSALSMDTYVDTAFVAQFEVVKGVISNIRSIRLQKNIAQKEPLDLQVLGENPVAEFNAVIQKMCNLSSITVVESKAEGASSFMVGTTEYAVPLGNMIDVEAEIARMEAELKHKEGFLQGVLKKLSNEKFINNAPAAVLEMERKKQADAESIISSLKESIAALKKA</sequence>
<feature type="chain" id="PRO_0000224439" description="Valine--tRNA ligase">
    <location>
        <begin position="1"/>
        <end position="879"/>
    </location>
</feature>
<feature type="coiled-coil region" evidence="1">
    <location>
        <begin position="807"/>
        <end position="878"/>
    </location>
</feature>
<feature type="short sequence motif" description="'HIGH' region">
    <location>
        <begin position="43"/>
        <end position="53"/>
    </location>
</feature>
<feature type="short sequence motif" description="'KMSKS' region">
    <location>
        <begin position="534"/>
        <end position="538"/>
    </location>
</feature>
<feature type="binding site" evidence="1">
    <location>
        <position position="537"/>
    </location>
    <ligand>
        <name>ATP</name>
        <dbReference type="ChEBI" id="CHEBI:30616"/>
    </ligand>
</feature>
<proteinExistence type="inferred from homology"/>
<comment type="function">
    <text evidence="1">Catalyzes the attachment of valine to tRNA(Val). As ValRS can inadvertently accommodate and process structurally similar amino acids such as threonine, to avoid such errors, it has a 'posttransfer' editing activity that hydrolyzes mischarged Thr-tRNA(Val) in a tRNA-dependent manner.</text>
</comment>
<comment type="catalytic activity">
    <reaction evidence="1">
        <text>tRNA(Val) + L-valine + ATP = L-valyl-tRNA(Val) + AMP + diphosphate</text>
        <dbReference type="Rhea" id="RHEA:10704"/>
        <dbReference type="Rhea" id="RHEA-COMP:9672"/>
        <dbReference type="Rhea" id="RHEA-COMP:9708"/>
        <dbReference type="ChEBI" id="CHEBI:30616"/>
        <dbReference type="ChEBI" id="CHEBI:33019"/>
        <dbReference type="ChEBI" id="CHEBI:57762"/>
        <dbReference type="ChEBI" id="CHEBI:78442"/>
        <dbReference type="ChEBI" id="CHEBI:78537"/>
        <dbReference type="ChEBI" id="CHEBI:456215"/>
        <dbReference type="EC" id="6.1.1.9"/>
    </reaction>
</comment>
<comment type="subunit">
    <text evidence="1">Monomer.</text>
</comment>
<comment type="subcellular location">
    <subcellularLocation>
        <location evidence="1">Cytoplasm</location>
    </subcellularLocation>
</comment>
<comment type="domain">
    <text evidence="1">ValRS has two distinct active sites: one for aminoacylation and one for editing. The misactivated threonine is translocated from the active site to the editing site.</text>
</comment>
<comment type="domain">
    <text evidence="1">The C-terminal coiled-coil domain is crucial for aminoacylation activity.</text>
</comment>
<comment type="similarity">
    <text evidence="1">Belongs to the class-I aminoacyl-tRNA synthetase family. ValS type 1 subfamily.</text>
</comment>
<organism>
    <name type="scientific">Bacteroides thetaiotaomicron (strain ATCC 29148 / DSM 2079 / JCM 5827 / CCUG 10774 / NCTC 10582 / VPI-5482 / E50)</name>
    <dbReference type="NCBI Taxonomy" id="226186"/>
    <lineage>
        <taxon>Bacteria</taxon>
        <taxon>Pseudomonadati</taxon>
        <taxon>Bacteroidota</taxon>
        <taxon>Bacteroidia</taxon>
        <taxon>Bacteroidales</taxon>
        <taxon>Bacteroidaceae</taxon>
        <taxon>Bacteroides</taxon>
    </lineage>
</organism>
<gene>
    <name evidence="1" type="primary">valS</name>
    <name type="ordered locus">BT_4353</name>
</gene>
<keyword id="KW-0030">Aminoacyl-tRNA synthetase</keyword>
<keyword id="KW-0067">ATP-binding</keyword>
<keyword id="KW-0175">Coiled coil</keyword>
<keyword id="KW-0963">Cytoplasm</keyword>
<keyword id="KW-0436">Ligase</keyword>
<keyword id="KW-0547">Nucleotide-binding</keyword>
<keyword id="KW-0648">Protein biosynthesis</keyword>
<keyword id="KW-1185">Reference proteome</keyword>
<reference key="1">
    <citation type="journal article" date="2003" name="Science">
        <title>A genomic view of the human-Bacteroides thetaiotaomicron symbiosis.</title>
        <authorList>
            <person name="Xu J."/>
            <person name="Bjursell M.K."/>
            <person name="Himrod J."/>
            <person name="Deng S."/>
            <person name="Carmichael L.K."/>
            <person name="Chiang H.C."/>
            <person name="Hooper L.V."/>
            <person name="Gordon J.I."/>
        </authorList>
    </citation>
    <scope>NUCLEOTIDE SEQUENCE [LARGE SCALE GENOMIC DNA]</scope>
    <source>
        <strain>ATCC 29148 / DSM 2079 / JCM 5827 / CCUG 10774 / NCTC 10582 / VPI-5482 / E50</strain>
    </source>
</reference>
<name>SYV_BACTN</name>
<dbReference type="EC" id="6.1.1.9" evidence="1"/>
<dbReference type="EMBL" id="AE015928">
    <property type="protein sequence ID" value="AAO79458.1"/>
    <property type="molecule type" value="Genomic_DNA"/>
</dbReference>
<dbReference type="RefSeq" id="NP_813264.1">
    <property type="nucleotide sequence ID" value="NC_004663.1"/>
</dbReference>
<dbReference type="RefSeq" id="WP_011109217.1">
    <property type="nucleotide sequence ID" value="NC_004663.1"/>
</dbReference>
<dbReference type="SMR" id="Q89ZM4"/>
<dbReference type="FunCoup" id="Q89ZM4">
    <property type="interactions" value="521"/>
</dbReference>
<dbReference type="STRING" id="226186.BT_4353"/>
<dbReference type="PaxDb" id="226186-BT_4353"/>
<dbReference type="EnsemblBacteria" id="AAO79458">
    <property type="protein sequence ID" value="AAO79458"/>
    <property type="gene ID" value="BT_4353"/>
</dbReference>
<dbReference type="GeneID" id="60925530"/>
<dbReference type="KEGG" id="bth:BT_4353"/>
<dbReference type="PATRIC" id="fig|226186.12.peg.4430"/>
<dbReference type="eggNOG" id="COG0525">
    <property type="taxonomic scope" value="Bacteria"/>
</dbReference>
<dbReference type="HOGENOM" id="CLU_001493_0_2_10"/>
<dbReference type="InParanoid" id="Q89ZM4"/>
<dbReference type="OrthoDB" id="9810365at2"/>
<dbReference type="Proteomes" id="UP000001414">
    <property type="component" value="Chromosome"/>
</dbReference>
<dbReference type="GO" id="GO:0005829">
    <property type="term" value="C:cytosol"/>
    <property type="evidence" value="ECO:0000318"/>
    <property type="project" value="GO_Central"/>
</dbReference>
<dbReference type="GO" id="GO:0002161">
    <property type="term" value="F:aminoacyl-tRNA deacylase activity"/>
    <property type="evidence" value="ECO:0007669"/>
    <property type="project" value="InterPro"/>
</dbReference>
<dbReference type="GO" id="GO:0005524">
    <property type="term" value="F:ATP binding"/>
    <property type="evidence" value="ECO:0007669"/>
    <property type="project" value="UniProtKB-UniRule"/>
</dbReference>
<dbReference type="GO" id="GO:0004832">
    <property type="term" value="F:valine-tRNA ligase activity"/>
    <property type="evidence" value="ECO:0000318"/>
    <property type="project" value="GO_Central"/>
</dbReference>
<dbReference type="GO" id="GO:0006438">
    <property type="term" value="P:valyl-tRNA aminoacylation"/>
    <property type="evidence" value="ECO:0000318"/>
    <property type="project" value="GO_Central"/>
</dbReference>
<dbReference type="CDD" id="cd07962">
    <property type="entry name" value="Anticodon_Ia_Val"/>
    <property type="match status" value="1"/>
</dbReference>
<dbReference type="CDD" id="cd00817">
    <property type="entry name" value="ValRS_core"/>
    <property type="match status" value="1"/>
</dbReference>
<dbReference type="FunFam" id="1.10.287.380:FF:000001">
    <property type="entry name" value="Valine--tRNA ligase"/>
    <property type="match status" value="1"/>
</dbReference>
<dbReference type="FunFam" id="1.10.730.10:FF:000172">
    <property type="entry name" value="Valine--tRNA ligase"/>
    <property type="match status" value="1"/>
</dbReference>
<dbReference type="FunFam" id="3.40.50.620:FF:000032">
    <property type="entry name" value="Valine--tRNA ligase"/>
    <property type="match status" value="1"/>
</dbReference>
<dbReference type="FunFam" id="3.90.740.10:FF:000015">
    <property type="entry name" value="Valine--tRNA ligase"/>
    <property type="match status" value="1"/>
</dbReference>
<dbReference type="Gene3D" id="3.40.50.620">
    <property type="entry name" value="HUPs"/>
    <property type="match status" value="2"/>
</dbReference>
<dbReference type="Gene3D" id="1.10.730.10">
    <property type="entry name" value="Isoleucyl-tRNA Synthetase, Domain 1"/>
    <property type="match status" value="1"/>
</dbReference>
<dbReference type="Gene3D" id="1.10.287.380">
    <property type="entry name" value="Valyl-tRNA synthetase, C-terminal domain"/>
    <property type="match status" value="1"/>
</dbReference>
<dbReference type="Gene3D" id="3.90.740.10">
    <property type="entry name" value="Valyl/Leucyl/Isoleucyl-tRNA synthetase, editing domain"/>
    <property type="match status" value="1"/>
</dbReference>
<dbReference type="HAMAP" id="MF_02004">
    <property type="entry name" value="Val_tRNA_synth_type1"/>
    <property type="match status" value="1"/>
</dbReference>
<dbReference type="InterPro" id="IPR001412">
    <property type="entry name" value="aa-tRNA-synth_I_CS"/>
</dbReference>
<dbReference type="InterPro" id="IPR002300">
    <property type="entry name" value="aa-tRNA-synth_Ia"/>
</dbReference>
<dbReference type="InterPro" id="IPR033705">
    <property type="entry name" value="Anticodon_Ia_Val"/>
</dbReference>
<dbReference type="InterPro" id="IPR013155">
    <property type="entry name" value="M/V/L/I-tRNA-synth_anticd-bd"/>
</dbReference>
<dbReference type="InterPro" id="IPR014729">
    <property type="entry name" value="Rossmann-like_a/b/a_fold"/>
</dbReference>
<dbReference type="InterPro" id="IPR010978">
    <property type="entry name" value="tRNA-bd_arm"/>
</dbReference>
<dbReference type="InterPro" id="IPR009080">
    <property type="entry name" value="tRNAsynth_Ia_anticodon-bd"/>
</dbReference>
<dbReference type="InterPro" id="IPR037118">
    <property type="entry name" value="Val-tRNA_synth_C_sf"/>
</dbReference>
<dbReference type="InterPro" id="IPR019499">
    <property type="entry name" value="Val-tRNA_synth_tRNA-bd"/>
</dbReference>
<dbReference type="InterPro" id="IPR009008">
    <property type="entry name" value="Val/Leu/Ile-tRNA-synth_edit"/>
</dbReference>
<dbReference type="InterPro" id="IPR002303">
    <property type="entry name" value="Valyl-tRNA_ligase"/>
</dbReference>
<dbReference type="NCBIfam" id="NF004349">
    <property type="entry name" value="PRK05729.1"/>
    <property type="match status" value="1"/>
</dbReference>
<dbReference type="NCBIfam" id="TIGR00422">
    <property type="entry name" value="valS"/>
    <property type="match status" value="1"/>
</dbReference>
<dbReference type="PANTHER" id="PTHR11946:SF109">
    <property type="entry name" value="VALINE--TRNA LIGASE"/>
    <property type="match status" value="1"/>
</dbReference>
<dbReference type="PANTHER" id="PTHR11946">
    <property type="entry name" value="VALYL-TRNA SYNTHETASES"/>
    <property type="match status" value="1"/>
</dbReference>
<dbReference type="Pfam" id="PF08264">
    <property type="entry name" value="Anticodon_1"/>
    <property type="match status" value="1"/>
</dbReference>
<dbReference type="Pfam" id="PF00133">
    <property type="entry name" value="tRNA-synt_1"/>
    <property type="match status" value="1"/>
</dbReference>
<dbReference type="Pfam" id="PF10458">
    <property type="entry name" value="Val_tRNA-synt_C"/>
    <property type="match status" value="1"/>
</dbReference>
<dbReference type="PRINTS" id="PR00986">
    <property type="entry name" value="TRNASYNTHVAL"/>
</dbReference>
<dbReference type="SUPFAM" id="SSF47323">
    <property type="entry name" value="Anticodon-binding domain of a subclass of class I aminoacyl-tRNA synthetases"/>
    <property type="match status" value="1"/>
</dbReference>
<dbReference type="SUPFAM" id="SSF52374">
    <property type="entry name" value="Nucleotidylyl transferase"/>
    <property type="match status" value="1"/>
</dbReference>
<dbReference type="SUPFAM" id="SSF46589">
    <property type="entry name" value="tRNA-binding arm"/>
    <property type="match status" value="1"/>
</dbReference>
<dbReference type="SUPFAM" id="SSF50677">
    <property type="entry name" value="ValRS/IleRS/LeuRS editing domain"/>
    <property type="match status" value="1"/>
</dbReference>
<dbReference type="PROSITE" id="PS00178">
    <property type="entry name" value="AA_TRNA_LIGASE_I"/>
    <property type="match status" value="1"/>
</dbReference>
<accession>Q89ZM4</accession>
<evidence type="ECO:0000255" key="1">
    <source>
        <dbReference type="HAMAP-Rule" id="MF_02004"/>
    </source>
</evidence>